<reference key="1">
    <citation type="journal article" date="1997" name="FEBS Lett.">
        <title>Dramatic enhancement of the specific expression of the heart-type fatty acid binding protein in rat brown adipose tissue by cold exposure.</title>
        <authorList>
            <person name="Daikoku T."/>
            <person name="Shinohara Y."/>
            <person name="Shima A."/>
            <person name="Yamazaki N."/>
            <person name="Terada H."/>
        </authorList>
    </citation>
    <scope>NUCLEOTIDE SEQUENCE [MRNA]</scope>
    <source>
        <strain>Wistar</strain>
        <tissue>White adipose tissue</tissue>
    </source>
</reference>
<reference key="2">
    <citation type="journal article" date="2004" name="Genome Res.">
        <title>The status, quality, and expansion of the NIH full-length cDNA project: the Mammalian Gene Collection (MGC).</title>
        <authorList>
            <consortium name="The MGC Project Team"/>
        </authorList>
    </citation>
    <scope>NUCLEOTIDE SEQUENCE [LARGE SCALE MRNA]</scope>
    <source>
        <tissue>Kidney</tissue>
    </source>
</reference>
<reference key="3">
    <citation type="submission" date="2007-04" db="UniProtKB">
        <authorList>
            <person name="Lubec G."/>
            <person name="Afjehi-Sadat L."/>
            <person name="Chen W.-Q."/>
        </authorList>
    </citation>
    <scope>PROTEIN SEQUENCE OF 6-48; 21-35; 70-101; 188-224 AND 241-270</scope>
    <scope>IDENTIFICATION BY MASS SPECTROMETRY</scope>
    <source>
        <strain>Sprague-Dawley</strain>
        <tissue>Hippocampus</tissue>
        <tissue>Spinal cord</tissue>
    </source>
</reference>
<reference key="4">
    <citation type="journal article" date="2012" name="Nat. Commun.">
        <title>Quantitative maps of protein phosphorylation sites across 14 different rat organs and tissues.</title>
        <authorList>
            <person name="Lundby A."/>
            <person name="Secher A."/>
            <person name="Lage K."/>
            <person name="Nordsborg N.B."/>
            <person name="Dmytriyev A."/>
            <person name="Lundby C."/>
            <person name="Olsen J.V."/>
        </authorList>
    </citation>
    <scope>PHOSPHORYLATION [LARGE SCALE ANALYSIS] AT TYR-326</scope>
    <scope>IDENTIFICATION BY MASS SPECTROMETRY [LARGE SCALE ANALYSIS]</scope>
</reference>
<proteinExistence type="evidence at protein level"/>
<comment type="function">
    <text evidence="3">Has glycerol-3-phosphate dehydrogenase activity.</text>
</comment>
<comment type="catalytic activity">
    <reaction evidence="3">
        <text>sn-glycerol 3-phosphate + NAD(+) = dihydroxyacetone phosphate + NADH + H(+)</text>
        <dbReference type="Rhea" id="RHEA:11092"/>
        <dbReference type="ChEBI" id="CHEBI:15378"/>
        <dbReference type="ChEBI" id="CHEBI:57540"/>
        <dbReference type="ChEBI" id="CHEBI:57597"/>
        <dbReference type="ChEBI" id="CHEBI:57642"/>
        <dbReference type="ChEBI" id="CHEBI:57945"/>
        <dbReference type="EC" id="1.1.1.8"/>
    </reaction>
    <physiologicalReaction direction="left-to-right" evidence="3">
        <dbReference type="Rhea" id="RHEA:11093"/>
    </physiologicalReaction>
</comment>
<comment type="subunit">
    <text evidence="1">Homodimer.</text>
</comment>
<comment type="subcellular location">
    <subcellularLocation>
        <location evidence="3">Cytoplasm</location>
    </subcellularLocation>
</comment>
<comment type="similarity">
    <text evidence="5">Belongs to the NAD-dependent glycerol-3-phosphate dehydrogenase family.</text>
</comment>
<gene>
    <name evidence="6" type="primary">Gpd1</name>
</gene>
<sequence>MAGKKVCIVGSGNWGSAIAKIVGSNASQLAHFDPRVTMWVFEEDIGGRKLTEIINTQHENVKYLPGHKLPPNVVAVPDVVQAATGADILVFVVPHQFIGKICDQLKGHLKANTIGISLIKGIDEGPNGLKLISEVIGESLGIPMSVLMGANIASEVAEEKFCETTIGCKDPAQGQLLKELMQTPNFRITVVQEVDTVEICGALKNIVAVGAGFCDGLGFGDNTKAAVIRLGLMEMIAFAKLFCSGSVSSATFLESCGVADLITTCYGGRNRKVAEAFARTGKSIEQLEKEMLNGQKLQGPQTARELHSILQHKGLVDKFPLFTAVYKVCYEGQPVGEFICCLQNHPEHM</sequence>
<dbReference type="EC" id="1.1.1.8" evidence="3"/>
<dbReference type="EMBL" id="AB002558">
    <property type="protein sequence ID" value="BAA21763.1"/>
    <property type="molecule type" value="mRNA"/>
</dbReference>
<dbReference type="EMBL" id="BC088396">
    <property type="protein sequence ID" value="AAH88396.1"/>
    <property type="molecule type" value="mRNA"/>
</dbReference>
<dbReference type="RefSeq" id="NP_071551.2">
    <property type="nucleotide sequence ID" value="NM_022215.2"/>
</dbReference>
<dbReference type="RefSeq" id="XP_006257438.1">
    <property type="nucleotide sequence ID" value="XM_006257376.2"/>
</dbReference>
<dbReference type="SMR" id="O35077"/>
<dbReference type="BioGRID" id="248887">
    <property type="interactions" value="2"/>
</dbReference>
<dbReference type="FunCoup" id="O35077">
    <property type="interactions" value="1173"/>
</dbReference>
<dbReference type="STRING" id="10116.ENSRNOP00000074647"/>
<dbReference type="ChEMBL" id="CHEMBL3971"/>
<dbReference type="iPTMnet" id="O35077"/>
<dbReference type="PhosphoSitePlus" id="O35077"/>
<dbReference type="jPOST" id="O35077"/>
<dbReference type="PaxDb" id="10116-ENSRNOP00000026200"/>
<dbReference type="Ensembl" id="ENSRNOT00000087662.2">
    <property type="protein sequence ID" value="ENSRNOP00000074647.1"/>
    <property type="gene ID" value="ENSRNOG00000056457.2"/>
</dbReference>
<dbReference type="GeneID" id="60666"/>
<dbReference type="KEGG" id="rno:60666"/>
<dbReference type="UCSC" id="RGD:621381">
    <property type="organism name" value="rat"/>
</dbReference>
<dbReference type="AGR" id="RGD:621381"/>
<dbReference type="CTD" id="2819"/>
<dbReference type="RGD" id="621381">
    <property type="gene designation" value="Gpd1"/>
</dbReference>
<dbReference type="eggNOG" id="KOG2711">
    <property type="taxonomic scope" value="Eukaryota"/>
</dbReference>
<dbReference type="GeneTree" id="ENSGT00390000003114"/>
<dbReference type="HOGENOM" id="CLU_033449_2_2_1"/>
<dbReference type="InParanoid" id="O35077"/>
<dbReference type="OMA" id="NRMFGNM"/>
<dbReference type="OrthoDB" id="10263760at2759"/>
<dbReference type="PhylomeDB" id="O35077"/>
<dbReference type="TreeFam" id="TF300836"/>
<dbReference type="Reactome" id="R-RNO-1483166">
    <property type="pathway name" value="Synthesis of PA"/>
</dbReference>
<dbReference type="PRO" id="PR:O35077"/>
<dbReference type="Proteomes" id="UP000002494">
    <property type="component" value="Chromosome 7"/>
</dbReference>
<dbReference type="Bgee" id="ENSRNOG00000056457">
    <property type="expression patterns" value="Expressed in skeletal muscle tissue and 20 other cell types or tissues"/>
</dbReference>
<dbReference type="GO" id="GO:0005829">
    <property type="term" value="C:cytosol"/>
    <property type="evidence" value="ECO:0000266"/>
    <property type="project" value="RGD"/>
</dbReference>
<dbReference type="GO" id="GO:0141152">
    <property type="term" value="F:glycerol-3-phosphate dehydrogenase (NAD+) activity"/>
    <property type="evidence" value="ECO:0007669"/>
    <property type="project" value="UniProtKB-EC"/>
</dbReference>
<dbReference type="GO" id="GO:0004368">
    <property type="term" value="F:glycerol-3-phosphate dehydrogenase (quinone) activity"/>
    <property type="evidence" value="ECO:0000314"/>
    <property type="project" value="RGD"/>
</dbReference>
<dbReference type="GO" id="GO:0051287">
    <property type="term" value="F:NAD binding"/>
    <property type="evidence" value="ECO:0000314"/>
    <property type="project" value="RGD"/>
</dbReference>
<dbReference type="GO" id="GO:0042803">
    <property type="term" value="F:protein homodimerization activity"/>
    <property type="evidence" value="ECO:0007669"/>
    <property type="project" value="InterPro"/>
</dbReference>
<dbReference type="GO" id="GO:0071320">
    <property type="term" value="P:cellular response to cAMP"/>
    <property type="evidence" value="ECO:0000266"/>
    <property type="project" value="RGD"/>
</dbReference>
<dbReference type="GO" id="GO:0071356">
    <property type="term" value="P:cellular response to tumor necrosis factor"/>
    <property type="evidence" value="ECO:0000266"/>
    <property type="project" value="RGD"/>
</dbReference>
<dbReference type="GO" id="GO:0006094">
    <property type="term" value="P:gluconeogenesis"/>
    <property type="evidence" value="ECO:0000266"/>
    <property type="project" value="RGD"/>
</dbReference>
<dbReference type="GO" id="GO:0046168">
    <property type="term" value="P:glycerol-3-phosphate catabolic process"/>
    <property type="evidence" value="ECO:0007669"/>
    <property type="project" value="InterPro"/>
</dbReference>
<dbReference type="GO" id="GO:0006072">
    <property type="term" value="P:glycerol-3-phosphate metabolic process"/>
    <property type="evidence" value="ECO:0000314"/>
    <property type="project" value="RGD"/>
</dbReference>
<dbReference type="GO" id="GO:0006127">
    <property type="term" value="P:glycerol-3-phosphate shuttle"/>
    <property type="evidence" value="ECO:0000266"/>
    <property type="project" value="RGD"/>
</dbReference>
<dbReference type="GO" id="GO:0046486">
    <property type="term" value="P:glycerolipid metabolic process"/>
    <property type="evidence" value="ECO:0000314"/>
    <property type="project" value="RGD"/>
</dbReference>
<dbReference type="GO" id="GO:0006734">
    <property type="term" value="P:NADH metabolic process"/>
    <property type="evidence" value="ECO:0000314"/>
    <property type="project" value="RGD"/>
</dbReference>
<dbReference type="GO" id="GO:0045821">
    <property type="term" value="P:positive regulation of glycolytic process"/>
    <property type="evidence" value="ECO:0000266"/>
    <property type="project" value="RGD"/>
</dbReference>
<dbReference type="FunFam" id="3.40.50.720:FF:000088">
    <property type="entry name" value="Glycerol-3-phosphate dehydrogenase [NAD(+)]"/>
    <property type="match status" value="1"/>
</dbReference>
<dbReference type="FunFam" id="1.10.1040.10:FF:000084">
    <property type="entry name" value="Glycerol-3-phosphate dehydrogenase [NAD(+)], cytoplasmic"/>
    <property type="match status" value="1"/>
</dbReference>
<dbReference type="Gene3D" id="1.10.1040.10">
    <property type="entry name" value="N-(1-d-carboxylethyl)-l-norvaline Dehydrogenase, domain 2"/>
    <property type="match status" value="1"/>
</dbReference>
<dbReference type="Gene3D" id="3.40.50.720">
    <property type="entry name" value="NAD(P)-binding Rossmann-like Domain"/>
    <property type="match status" value="1"/>
</dbReference>
<dbReference type="InterPro" id="IPR008927">
    <property type="entry name" value="6-PGluconate_DH-like_C_sf"/>
</dbReference>
<dbReference type="InterPro" id="IPR013328">
    <property type="entry name" value="6PGD_dom2"/>
</dbReference>
<dbReference type="InterPro" id="IPR006168">
    <property type="entry name" value="G3P_DH_NAD-dep"/>
</dbReference>
<dbReference type="InterPro" id="IPR006109">
    <property type="entry name" value="G3P_DH_NAD-dep_C"/>
</dbReference>
<dbReference type="InterPro" id="IPR017751">
    <property type="entry name" value="G3P_DH_NAD-dep_euk"/>
</dbReference>
<dbReference type="InterPro" id="IPR011128">
    <property type="entry name" value="G3P_DH_NAD-dep_N"/>
</dbReference>
<dbReference type="InterPro" id="IPR036291">
    <property type="entry name" value="NAD(P)-bd_dom_sf"/>
</dbReference>
<dbReference type="NCBIfam" id="TIGR03376">
    <property type="entry name" value="glycerol3P_DH"/>
    <property type="match status" value="1"/>
</dbReference>
<dbReference type="PANTHER" id="PTHR11728">
    <property type="entry name" value="GLYCEROL-3-PHOSPHATE DEHYDROGENASE"/>
    <property type="match status" value="1"/>
</dbReference>
<dbReference type="PANTHER" id="PTHR11728:SF32">
    <property type="entry name" value="GLYCEROL-3-PHOSPHATE DEHYDROGENASE [NAD(+)], CYTOPLASMIC"/>
    <property type="match status" value="1"/>
</dbReference>
<dbReference type="Pfam" id="PF07479">
    <property type="entry name" value="NAD_Gly3P_dh_C"/>
    <property type="match status" value="1"/>
</dbReference>
<dbReference type="Pfam" id="PF01210">
    <property type="entry name" value="NAD_Gly3P_dh_N"/>
    <property type="match status" value="1"/>
</dbReference>
<dbReference type="PIRSF" id="PIRSF000114">
    <property type="entry name" value="Glycerol-3-P_dh"/>
    <property type="match status" value="1"/>
</dbReference>
<dbReference type="PRINTS" id="PR00077">
    <property type="entry name" value="GPDHDRGNASE"/>
</dbReference>
<dbReference type="SUPFAM" id="SSF48179">
    <property type="entry name" value="6-phosphogluconate dehydrogenase C-terminal domain-like"/>
    <property type="match status" value="1"/>
</dbReference>
<dbReference type="SUPFAM" id="SSF51735">
    <property type="entry name" value="NAD(P)-binding Rossmann-fold domains"/>
    <property type="match status" value="1"/>
</dbReference>
<dbReference type="PROSITE" id="PS00957">
    <property type="entry name" value="NAD_G3PDH"/>
    <property type="match status" value="1"/>
</dbReference>
<feature type="chain" id="PRO_0000138082" description="Glycerol-3-phosphate dehydrogenase [NAD(+)], cytoplasmic">
    <location>
        <begin position="1"/>
        <end position="349"/>
    </location>
</feature>
<feature type="active site" description="Proton acceptor" evidence="4">
    <location>
        <position position="204"/>
    </location>
</feature>
<feature type="binding site" evidence="3">
    <location>
        <begin position="10"/>
        <end position="15"/>
    </location>
    <ligand>
        <name>NAD(+)</name>
        <dbReference type="ChEBI" id="CHEBI:57540"/>
    </ligand>
</feature>
<feature type="binding site" evidence="1">
    <location>
        <position position="120"/>
    </location>
    <ligand>
        <name>substrate</name>
    </ligand>
</feature>
<feature type="binding site" evidence="3">
    <location>
        <position position="153"/>
    </location>
    <ligand>
        <name>NAD(+)</name>
        <dbReference type="ChEBI" id="CHEBI:57540"/>
    </ligand>
</feature>
<feature type="binding site" evidence="1">
    <location>
        <begin position="269"/>
        <end position="270"/>
    </location>
    <ligand>
        <name>substrate</name>
    </ligand>
</feature>
<feature type="binding site" evidence="3">
    <location>
        <position position="269"/>
    </location>
    <ligand>
        <name>NAD(+)</name>
        <dbReference type="ChEBI" id="CHEBI:57540"/>
    </ligand>
</feature>
<feature type="binding site" evidence="3">
    <location>
        <position position="296"/>
    </location>
    <ligand>
        <name>NAD(+)</name>
        <dbReference type="ChEBI" id="CHEBI:57540"/>
    </ligand>
</feature>
<feature type="binding site" evidence="3">
    <location>
        <position position="298"/>
    </location>
    <ligand>
        <name>NAD(+)</name>
        <dbReference type="ChEBI" id="CHEBI:57540"/>
    </ligand>
</feature>
<feature type="modified residue" description="Phosphoserine" evidence="3">
    <location>
        <position position="154"/>
    </location>
</feature>
<feature type="modified residue" description="N6-succinyllysine" evidence="2">
    <location>
        <position position="289"/>
    </location>
</feature>
<feature type="modified residue" description="Phosphotyrosine" evidence="7">
    <location>
        <position position="326"/>
    </location>
</feature>
<feature type="sequence conflict" description="In Ref. 1; BAA21763." evidence="5" ref="1">
    <original>E</original>
    <variation>D</variation>
    <location>
        <position position="179"/>
    </location>
</feature>
<feature type="sequence conflict" description="In Ref. 1; BAA21763." evidence="5" ref="1">
    <original>F</original>
    <variation>S</variation>
    <location>
        <position position="238"/>
    </location>
</feature>
<feature type="sequence conflict" description="In Ref. 1; BAA21763." evidence="5" ref="1">
    <original>F</original>
    <variation>I</variation>
    <location>
        <position position="338"/>
    </location>
</feature>
<feature type="sequence conflict" description="In Ref. 1; BAA21763." evidence="5" ref="1">
    <original>C</original>
    <variation>R</variation>
    <location>
        <position position="340"/>
    </location>
</feature>
<keyword id="KW-0963">Cytoplasm</keyword>
<keyword id="KW-0903">Direct protein sequencing</keyword>
<keyword id="KW-0520">NAD</keyword>
<keyword id="KW-0560">Oxidoreductase</keyword>
<keyword id="KW-0597">Phosphoprotein</keyword>
<keyword id="KW-1185">Reference proteome</keyword>
<name>GPDA_RAT</name>
<evidence type="ECO:0000250" key="1"/>
<evidence type="ECO:0000250" key="2">
    <source>
        <dbReference type="UniProtKB" id="P13707"/>
    </source>
</evidence>
<evidence type="ECO:0000250" key="3">
    <source>
        <dbReference type="UniProtKB" id="P21695"/>
    </source>
</evidence>
<evidence type="ECO:0000255" key="4"/>
<evidence type="ECO:0000305" key="5"/>
<evidence type="ECO:0000312" key="6">
    <source>
        <dbReference type="RGD" id="621381"/>
    </source>
</evidence>
<evidence type="ECO:0007744" key="7">
    <source>
    </source>
</evidence>
<organism>
    <name type="scientific">Rattus norvegicus</name>
    <name type="common">Rat</name>
    <dbReference type="NCBI Taxonomy" id="10116"/>
    <lineage>
        <taxon>Eukaryota</taxon>
        <taxon>Metazoa</taxon>
        <taxon>Chordata</taxon>
        <taxon>Craniata</taxon>
        <taxon>Vertebrata</taxon>
        <taxon>Euteleostomi</taxon>
        <taxon>Mammalia</taxon>
        <taxon>Eutheria</taxon>
        <taxon>Euarchontoglires</taxon>
        <taxon>Glires</taxon>
        <taxon>Rodentia</taxon>
        <taxon>Myomorpha</taxon>
        <taxon>Muroidea</taxon>
        <taxon>Muridae</taxon>
        <taxon>Murinae</taxon>
        <taxon>Rattus</taxon>
    </lineage>
</organism>
<protein>
    <recommendedName>
        <fullName>Glycerol-3-phosphate dehydrogenase [NAD(+)], cytoplasmic</fullName>
        <shortName>GPD-C</shortName>
        <shortName>GPDH-C</shortName>
        <ecNumber evidence="3">1.1.1.8</ecNumber>
    </recommendedName>
</protein>
<accession>O35077</accession>
<accession>Q5I0F4</accession>